<comment type="function">
    <text evidence="10 11">Receptor tyrosine kinase which mediates actions of insulin. May be required for forelimb regeneration.</text>
</comment>
<comment type="catalytic activity">
    <reaction evidence="6">
        <text>L-tyrosyl-[protein] + ATP = O-phospho-L-tyrosyl-[protein] + ADP + H(+)</text>
        <dbReference type="Rhea" id="RHEA:10596"/>
        <dbReference type="Rhea" id="RHEA-COMP:10136"/>
        <dbReference type="Rhea" id="RHEA-COMP:20101"/>
        <dbReference type="ChEBI" id="CHEBI:15378"/>
        <dbReference type="ChEBI" id="CHEBI:30616"/>
        <dbReference type="ChEBI" id="CHEBI:46858"/>
        <dbReference type="ChEBI" id="CHEBI:61978"/>
        <dbReference type="ChEBI" id="CHEBI:456216"/>
        <dbReference type="EC" id="2.7.10.1"/>
    </reaction>
</comment>
<comment type="activity regulation">
    <text evidence="2">Autophosphorylation activates the kinase activity.</text>
</comment>
<comment type="subunit">
    <text evidence="1">Tetramer of 2 alpha and 2 beta chains linked by disulfide bonds. The alpha chains contribute to the formation of the ligand-binding domain, while the beta chains carry the kinase domain (By similarity).</text>
</comment>
<comment type="subcellular location">
    <subcellularLocation>
        <location evidence="9 11">Cell membrane</location>
        <topology evidence="9 11">Single-pass type I membrane protein</topology>
    </subcellularLocation>
</comment>
<comment type="tissue specificity">
    <text evidence="8 10 11">Localized mainly to the envelope in oocytes. Localized to the animal hemisphere during early embryonic cleavage. Expressed during organogenesis in regions of ecto- and mesodermic origins. Expressed in the entire encephalon, the otic and optic vesicles, the gills, the somites and the pronephric tubules of the embryo. Also found in adult liver, muscle and regenerated forelimbs.</text>
</comment>
<comment type="developmental stage">
    <text evidence="8 9">Expressed both maternally and zygotically. Weakly expressed in embryos through gastrulation and neurulation. Expressed in the tailbud stage and in older tadpoles.</text>
</comment>
<comment type="PTM">
    <text evidence="10 11">Autophosphorylated on tyrosine residues in response to insulin.</text>
</comment>
<comment type="similarity">
    <text evidence="4">Belongs to the protein kinase superfamily. Tyr protein kinase family. Insulin receptor subfamily.</text>
</comment>
<evidence type="ECO:0000250" key="1"/>
<evidence type="ECO:0000250" key="2">
    <source>
        <dbReference type="UniProtKB" id="P06213"/>
    </source>
</evidence>
<evidence type="ECO:0000255" key="3"/>
<evidence type="ECO:0000255" key="4">
    <source>
        <dbReference type="PROSITE-ProRule" id="PRU00159"/>
    </source>
</evidence>
<evidence type="ECO:0000255" key="5">
    <source>
        <dbReference type="PROSITE-ProRule" id="PRU00316"/>
    </source>
</evidence>
<evidence type="ECO:0000255" key="6">
    <source>
        <dbReference type="PROSITE-ProRule" id="PRU10028"/>
    </source>
</evidence>
<evidence type="ECO:0000256" key="7">
    <source>
        <dbReference type="SAM" id="MobiDB-lite"/>
    </source>
</evidence>
<evidence type="ECO:0000269" key="8">
    <source>
    </source>
</evidence>
<evidence type="ECO:0000269" key="9">
    <source>
    </source>
</evidence>
<evidence type="ECO:0000269" key="10">
    <source>
    </source>
</evidence>
<evidence type="ECO:0000269" key="11">
    <source>
    </source>
</evidence>
<evidence type="ECO:0000305" key="12"/>
<evidence type="ECO:0000312" key="13">
    <source>
        <dbReference type="EMBL" id="AAA50006.1"/>
    </source>
</evidence>
<evidence type="ECO:0000312" key="14">
    <source>
        <dbReference type="EMBL" id="CAB46565.1"/>
    </source>
</evidence>
<evidence type="ECO:0000312" key="15">
    <source>
        <dbReference type="PIR" id="B41122"/>
    </source>
</evidence>
<reference evidence="12 14" key="1">
    <citation type="journal article" date="1999" name="Mech. Dev.">
        <title>Expression pattern of insulin receptor mRNA during Xenopus laevis embryogenesis.</title>
        <authorList>
            <person name="Groigno L."/>
            <person name="Richard-Parpaillon L."/>
            <person name="Boujard D."/>
        </authorList>
    </citation>
    <scope>NUCLEOTIDE SEQUENCE [MRNA]</scope>
    <scope>TISSUE SPECIFICITY</scope>
    <scope>DEVELOPMENTAL STAGE</scope>
    <source>
        <tissue evidence="8">Oocyte</tissue>
    </source>
</reference>
<reference evidence="12 13 15" key="2">
    <citation type="journal article" date="1991" name="Proc. Natl. Acad. Sci. U.S.A.">
        <title>Genes encoding receptors for insulin and insulin-like growth factor I are expressed in Xenopus oocytes and embryos.</title>
        <authorList>
            <person name="Scavo L.M."/>
            <person name="Shuldiner A.R."/>
            <person name="Serrano J."/>
            <person name="Dashner R."/>
            <person name="Roth J."/>
            <person name="de Pablo F."/>
        </authorList>
    </citation>
    <scope>NUCLEOTIDE SEQUENCE [MRNA] OF 1023-1178</scope>
    <scope>SUBCELLULAR LOCATION</scope>
    <scope>DEVELOPMENTAL STAGE</scope>
    <source>
        <tissue evidence="9">Embryo</tissue>
    </source>
</reference>
<reference evidence="12" key="3">
    <citation type="journal article" date="1991" name="Biochem. J.">
        <title>Insulin and insulin-like-growth-factor-I (IGF-I) receptors in Xenopus laevis oocytes. Comparison with insulin receptors from liver and muscle.</title>
        <authorList>
            <person name="Hainaut P."/>
            <person name="Kowalski A."/>
            <person name="Giorgetti S."/>
            <person name="Baron V."/>
            <person name="Van Obberghen E."/>
        </authorList>
    </citation>
    <scope>FUNCTION</scope>
    <scope>TISSUE SPECIFICITY</scope>
    <scope>AUTOPHOSPHORYLATION</scope>
</reference>
<reference evidence="12" key="4">
    <citation type="journal article" date="1995" name="J. Exp. Zool.">
        <title>Insulin receptors in Xenopus laevis liver and forelimb regenerates and the effects of local insulin deprivation on regeneration.</title>
        <authorList>
            <person name="Cowan B.J."/>
            <person name="Foty R.A."/>
            <person name="Liversage R.A."/>
        </authorList>
    </citation>
    <scope>FUNCTION</scope>
    <scope>SUBCELLULAR LOCATION</scope>
    <scope>TISSUE SPECIFICITY</scope>
    <scope>AUTOPHOSPHORYLATION</scope>
</reference>
<gene>
    <name type="primary">insr</name>
</gene>
<name>INSR_XENLA</name>
<sequence>MGQGVLRGEGHPNNNPNSKVGWKSLVGIITIFMLILCDQSDGKICYSMDIRNNISQFSMLEDCTVIEGHLQILLMFTSKPENFRGLRFPKLTTITDYLLLFRVYGLESLKDLFPNLTVIRGTRLFFNYALVIFEMVHXKEIGLYNLMNITRGSVRIEKNNELCYLSTIDWSIILDSVEDNYIELNRDNKEECGDVCPGTVKGKSKCKHTLVNGALVERCWTQDHCQKVCPSDCKGSGCLPDGQCCHPECLGSCRKPNDPSECTACRHFQNEGVCVTACPKGSYQFQGWRCIDFNTCQELNSRCQNSRDNSCPPYVIHKGECMPDCPSGYIANSTTRTCTPCAGPCPKVCTIFQNVKTIDSVTSAQELRGCTVINGSLIINLRGGNNIATELEANLGLIEEISGYLKIRRSYALVSLSFFRKLRLIRGEVLEAGNYSFYALDNPSLRQLWDWHKHNLTIIHGKLFFHHNPRLCLSQIHQMEEVTGTKGRQDKNDIATKTNGDQASCEDNLLTFNFIKTSHDMVLLRWDAYWPPDYRDLLGFMVHYKEAPFQNVTEFDGQDACGSNSWTVVDMDAPERSADGKTQSPGCLLRSLKPWTQYAVFVKTLVSGSDEGRTYGAKSKIIYIRTNETIPSVPLDPFSVSNSTSQIILKWKPPSEPNGNVTHYLVYWQEQPEDSDLYEVDYCNKGLKLPSRTWTPPTEIDENGNENQTEHTSVNKCCPCPKTEFQIQKEQDESAFRKTFENYLHNEVFIPRPVRKRRDLFGVANGTLPDPVTAPPLFNVSSTRAPDEPEPKIYSQKVWFKESVLISGLKHFTGYRIEIHACNHELSMGCSVAAYVNARTMPEATADKVVGPITYEYVEPNIIHLKWQEPKDPNGLIVLYEVHYSRVGGIEEVITCVSQKQYNTDKGGKLRVLTPGNYSVKIRATSLAGNGSWTEQAYFQVPDHPHSNIVKIITGPIIAVFLLLIVLVYCVVQKKKDAEGPAGPLYTSSNPEYLSASEVYIPDEWEVPRDKINLLRELGQGSFGMVYEGIAKDIIKGEPEVRVAVKTVNESASLRERIEFLNEASVMKAFNCHHVVRLLGVVSKGQPTLVIMELMAHGDLKSYLRSLRPDAENNPGRLAPTLKEIIQMAAEISDGMAYLNAKKFVHRDLAARNCMVADDYAVKIGDFGMTRDIYETDYYRKGGKGLLPVRWMSPESLKDGVFTAFSDVWSFGVVLWEITSLAEQPYQGLSNEQVLKFVMDGGSLDHPENCPPRLHSLMQMCWQYNPKMRPTFLEIIDMLKDDLRPSFQDVSFYYSDENKPPETDDLEIDFENMESTPLDPSSCSLRDQSSRTNIYEEHIPYTHMNGGRKNGRILSLPRSSPS</sequence>
<dbReference type="EC" id="2.7.10.1"/>
<dbReference type="EMBL" id="AJ132556">
    <property type="protein sequence ID" value="CAB46565.1"/>
    <property type="molecule type" value="mRNA"/>
</dbReference>
<dbReference type="EMBL" id="M64660">
    <property type="protein sequence ID" value="AAA50006.1"/>
    <property type="molecule type" value="mRNA"/>
</dbReference>
<dbReference type="PIR" id="B41122">
    <property type="entry name" value="B41122"/>
</dbReference>
<dbReference type="RefSeq" id="NP_001081702.1">
    <property type="nucleotide sequence ID" value="NM_001088233.1"/>
</dbReference>
<dbReference type="GlyCosmos" id="Q9PVZ4">
    <property type="glycosylation" value="16 sites, No reported glycans"/>
</dbReference>
<dbReference type="GeneID" id="398006"/>
<dbReference type="KEGG" id="xla:398006"/>
<dbReference type="AGR" id="Xenbase:XB-GENE-920741"/>
<dbReference type="CTD" id="398006"/>
<dbReference type="Xenbase" id="XB-GENE-920741">
    <property type="gene designation" value="insr.L"/>
</dbReference>
<dbReference type="OrthoDB" id="5809444at2759"/>
<dbReference type="Proteomes" id="UP000186698">
    <property type="component" value="Chromosome 1L"/>
</dbReference>
<dbReference type="Bgee" id="398006">
    <property type="expression patterns" value="Expressed in blastula and 17 other cell types or tissues"/>
</dbReference>
<dbReference type="GO" id="GO:0030424">
    <property type="term" value="C:axon"/>
    <property type="evidence" value="ECO:0000318"/>
    <property type="project" value="GO_Central"/>
</dbReference>
<dbReference type="GO" id="GO:0005899">
    <property type="term" value="C:insulin receptor complex"/>
    <property type="evidence" value="ECO:0000318"/>
    <property type="project" value="GO_Central"/>
</dbReference>
<dbReference type="GO" id="GO:0016020">
    <property type="term" value="C:membrane"/>
    <property type="evidence" value="ECO:0000314"/>
    <property type="project" value="UniProtKB"/>
</dbReference>
<dbReference type="GO" id="GO:0005886">
    <property type="term" value="C:plasma membrane"/>
    <property type="evidence" value="ECO:0000314"/>
    <property type="project" value="UniProtKB"/>
</dbReference>
<dbReference type="GO" id="GO:0005524">
    <property type="term" value="F:ATP binding"/>
    <property type="evidence" value="ECO:0007669"/>
    <property type="project" value="UniProtKB-KW"/>
</dbReference>
<dbReference type="GO" id="GO:0043559">
    <property type="term" value="F:insulin binding"/>
    <property type="evidence" value="ECO:0000314"/>
    <property type="project" value="UniProtKB"/>
</dbReference>
<dbReference type="GO" id="GO:0005009">
    <property type="term" value="F:insulin receptor activity"/>
    <property type="evidence" value="ECO:0000314"/>
    <property type="project" value="UniProtKB"/>
</dbReference>
<dbReference type="GO" id="GO:0043560">
    <property type="term" value="F:insulin receptor substrate binding"/>
    <property type="evidence" value="ECO:0000250"/>
    <property type="project" value="UniProtKB"/>
</dbReference>
<dbReference type="GO" id="GO:0043548">
    <property type="term" value="F:phosphatidylinositol 3-kinase binding"/>
    <property type="evidence" value="ECO:0000250"/>
    <property type="project" value="UniProtKB"/>
</dbReference>
<dbReference type="GO" id="GO:0004713">
    <property type="term" value="F:protein tyrosine kinase activity"/>
    <property type="evidence" value="ECO:0000314"/>
    <property type="project" value="UniProtKB"/>
</dbReference>
<dbReference type="GO" id="GO:0051425">
    <property type="term" value="F:PTB domain binding"/>
    <property type="evidence" value="ECO:0000353"/>
    <property type="project" value="UniProtKB"/>
</dbReference>
<dbReference type="GO" id="GO:0042169">
    <property type="term" value="F:SH2 domain binding"/>
    <property type="evidence" value="ECO:0000353"/>
    <property type="project" value="UniProtKB"/>
</dbReference>
<dbReference type="GO" id="GO:0004714">
    <property type="term" value="F:transmembrane receptor protein tyrosine kinase activity"/>
    <property type="evidence" value="ECO:0000304"/>
    <property type="project" value="UniProtKB"/>
</dbReference>
<dbReference type="GO" id="GO:0042593">
    <property type="term" value="P:glucose homeostasis"/>
    <property type="evidence" value="ECO:0000318"/>
    <property type="project" value="GO_Central"/>
</dbReference>
<dbReference type="GO" id="GO:0008286">
    <property type="term" value="P:insulin receptor signaling pathway"/>
    <property type="evidence" value="ECO:0000314"/>
    <property type="project" value="UniProtKB"/>
</dbReference>
<dbReference type="GO" id="GO:0043410">
    <property type="term" value="P:positive regulation of MAPK cascade"/>
    <property type="evidence" value="ECO:0000318"/>
    <property type="project" value="GO_Central"/>
</dbReference>
<dbReference type="GO" id="GO:0051897">
    <property type="term" value="P:positive regulation of phosphatidylinositol 3-kinase/protein kinase B signal transduction"/>
    <property type="evidence" value="ECO:0000318"/>
    <property type="project" value="GO_Central"/>
</dbReference>
<dbReference type="GO" id="GO:0046777">
    <property type="term" value="P:protein autophosphorylation"/>
    <property type="evidence" value="ECO:0000314"/>
    <property type="project" value="UniProtKB"/>
</dbReference>
<dbReference type="CDD" id="cd00063">
    <property type="entry name" value="FN3"/>
    <property type="match status" value="3"/>
</dbReference>
<dbReference type="CDD" id="cd00064">
    <property type="entry name" value="FU"/>
    <property type="match status" value="1"/>
</dbReference>
<dbReference type="CDD" id="cd05061">
    <property type="entry name" value="PTKc_InsR"/>
    <property type="match status" value="1"/>
</dbReference>
<dbReference type="FunFam" id="1.10.510.10:FF:000050">
    <property type="entry name" value="Tyrosine-protein kinase receptor"/>
    <property type="match status" value="1"/>
</dbReference>
<dbReference type="FunFam" id="2.10.220.10:FF:000005">
    <property type="entry name" value="Tyrosine-protein kinase receptor"/>
    <property type="match status" value="1"/>
</dbReference>
<dbReference type="FunFam" id="2.60.40.10:FF:000087">
    <property type="entry name" value="Tyrosine-protein kinase receptor"/>
    <property type="match status" value="1"/>
</dbReference>
<dbReference type="FunFam" id="2.60.40.10:FF:000108">
    <property type="entry name" value="Tyrosine-protein kinase receptor"/>
    <property type="match status" value="1"/>
</dbReference>
<dbReference type="FunFam" id="3.30.200.20:FF:000026">
    <property type="entry name" value="Tyrosine-protein kinase receptor"/>
    <property type="match status" value="1"/>
</dbReference>
<dbReference type="FunFam" id="3.80.20.20:FF:000001">
    <property type="entry name" value="Tyrosine-protein kinase receptor"/>
    <property type="match status" value="1"/>
</dbReference>
<dbReference type="FunFam" id="3.80.20.20:FF:000002">
    <property type="entry name" value="Tyrosine-protein kinase receptor"/>
    <property type="match status" value="1"/>
</dbReference>
<dbReference type="Gene3D" id="2.10.220.10">
    <property type="entry name" value="Hormone Receptor, Insulin-like Growth Factor Receptor 1, Chain A, domain 2"/>
    <property type="match status" value="1"/>
</dbReference>
<dbReference type="Gene3D" id="2.60.40.10">
    <property type="entry name" value="Immunoglobulins"/>
    <property type="match status" value="4"/>
</dbReference>
<dbReference type="Gene3D" id="3.30.200.20">
    <property type="entry name" value="Phosphorylase Kinase, domain 1"/>
    <property type="match status" value="1"/>
</dbReference>
<dbReference type="Gene3D" id="3.80.20.20">
    <property type="entry name" value="Receptor L-domain"/>
    <property type="match status" value="2"/>
</dbReference>
<dbReference type="Gene3D" id="1.10.510.10">
    <property type="entry name" value="Transferase(Phosphotransferase) domain 1"/>
    <property type="match status" value="1"/>
</dbReference>
<dbReference type="InterPro" id="IPR003961">
    <property type="entry name" value="FN3_dom"/>
</dbReference>
<dbReference type="InterPro" id="IPR036116">
    <property type="entry name" value="FN3_sf"/>
</dbReference>
<dbReference type="InterPro" id="IPR006211">
    <property type="entry name" value="Furin-like_Cys-rich_dom"/>
</dbReference>
<dbReference type="InterPro" id="IPR006212">
    <property type="entry name" value="Furin_repeat"/>
</dbReference>
<dbReference type="InterPro" id="IPR009030">
    <property type="entry name" value="Growth_fac_rcpt_cys_sf"/>
</dbReference>
<dbReference type="InterPro" id="IPR013783">
    <property type="entry name" value="Ig-like_fold"/>
</dbReference>
<dbReference type="InterPro" id="IPR040969">
    <property type="entry name" value="Insulin_TMD"/>
</dbReference>
<dbReference type="InterPro" id="IPR011009">
    <property type="entry name" value="Kinase-like_dom_sf"/>
</dbReference>
<dbReference type="InterPro" id="IPR000719">
    <property type="entry name" value="Prot_kinase_dom"/>
</dbReference>
<dbReference type="InterPro" id="IPR017441">
    <property type="entry name" value="Protein_kinase_ATP_BS"/>
</dbReference>
<dbReference type="InterPro" id="IPR000494">
    <property type="entry name" value="Rcpt_L-dom"/>
</dbReference>
<dbReference type="InterPro" id="IPR036941">
    <property type="entry name" value="Rcpt_L-dom_sf"/>
</dbReference>
<dbReference type="InterPro" id="IPR050122">
    <property type="entry name" value="RTK"/>
</dbReference>
<dbReference type="InterPro" id="IPR001245">
    <property type="entry name" value="Ser-Thr/Tyr_kinase_cat_dom"/>
</dbReference>
<dbReference type="InterPro" id="IPR008266">
    <property type="entry name" value="Tyr_kinase_AS"/>
</dbReference>
<dbReference type="InterPro" id="IPR020635">
    <property type="entry name" value="Tyr_kinase_cat_dom"/>
</dbReference>
<dbReference type="InterPro" id="IPR016246">
    <property type="entry name" value="Tyr_kinase_insulin-like_rcpt"/>
</dbReference>
<dbReference type="InterPro" id="IPR002011">
    <property type="entry name" value="Tyr_kinase_rcpt_2_CS"/>
</dbReference>
<dbReference type="PANTHER" id="PTHR24416:SF535">
    <property type="entry name" value="INSULIN RECEPTOR"/>
    <property type="match status" value="1"/>
</dbReference>
<dbReference type="PANTHER" id="PTHR24416">
    <property type="entry name" value="TYROSINE-PROTEIN KINASE RECEPTOR"/>
    <property type="match status" value="1"/>
</dbReference>
<dbReference type="Pfam" id="PF00757">
    <property type="entry name" value="Furin-like"/>
    <property type="match status" value="1"/>
</dbReference>
<dbReference type="Pfam" id="PF17870">
    <property type="entry name" value="Insulin_TMD"/>
    <property type="match status" value="1"/>
</dbReference>
<dbReference type="Pfam" id="PF07714">
    <property type="entry name" value="PK_Tyr_Ser-Thr"/>
    <property type="match status" value="1"/>
</dbReference>
<dbReference type="Pfam" id="PF01030">
    <property type="entry name" value="Recep_L_domain"/>
    <property type="match status" value="2"/>
</dbReference>
<dbReference type="PIRSF" id="PIRSF000620">
    <property type="entry name" value="Insulin_receptor"/>
    <property type="match status" value="1"/>
</dbReference>
<dbReference type="PRINTS" id="PR00109">
    <property type="entry name" value="TYRKINASE"/>
</dbReference>
<dbReference type="SMART" id="SM00060">
    <property type="entry name" value="FN3"/>
    <property type="match status" value="3"/>
</dbReference>
<dbReference type="SMART" id="SM00261">
    <property type="entry name" value="FU"/>
    <property type="match status" value="2"/>
</dbReference>
<dbReference type="SMART" id="SM00219">
    <property type="entry name" value="TyrKc"/>
    <property type="match status" value="1"/>
</dbReference>
<dbReference type="SUPFAM" id="SSF49265">
    <property type="entry name" value="Fibronectin type III"/>
    <property type="match status" value="3"/>
</dbReference>
<dbReference type="SUPFAM" id="SSF57184">
    <property type="entry name" value="Growth factor receptor domain"/>
    <property type="match status" value="1"/>
</dbReference>
<dbReference type="SUPFAM" id="SSF52058">
    <property type="entry name" value="L domain-like"/>
    <property type="match status" value="2"/>
</dbReference>
<dbReference type="SUPFAM" id="SSF56112">
    <property type="entry name" value="Protein kinase-like (PK-like)"/>
    <property type="match status" value="1"/>
</dbReference>
<dbReference type="PROSITE" id="PS50853">
    <property type="entry name" value="FN3"/>
    <property type="match status" value="3"/>
</dbReference>
<dbReference type="PROSITE" id="PS00107">
    <property type="entry name" value="PROTEIN_KINASE_ATP"/>
    <property type="match status" value="1"/>
</dbReference>
<dbReference type="PROSITE" id="PS50011">
    <property type="entry name" value="PROTEIN_KINASE_DOM"/>
    <property type="match status" value="1"/>
</dbReference>
<dbReference type="PROSITE" id="PS00109">
    <property type="entry name" value="PROTEIN_KINASE_TYR"/>
    <property type="match status" value="1"/>
</dbReference>
<dbReference type="PROSITE" id="PS00239">
    <property type="entry name" value="RECEPTOR_TYR_KIN_II"/>
    <property type="match status" value="1"/>
</dbReference>
<organism>
    <name type="scientific">Xenopus laevis</name>
    <name type="common">African clawed frog</name>
    <dbReference type="NCBI Taxonomy" id="8355"/>
    <lineage>
        <taxon>Eukaryota</taxon>
        <taxon>Metazoa</taxon>
        <taxon>Chordata</taxon>
        <taxon>Craniata</taxon>
        <taxon>Vertebrata</taxon>
        <taxon>Euteleostomi</taxon>
        <taxon>Amphibia</taxon>
        <taxon>Batrachia</taxon>
        <taxon>Anura</taxon>
        <taxon>Pipoidea</taxon>
        <taxon>Pipidae</taxon>
        <taxon>Xenopodinae</taxon>
        <taxon>Xenopus</taxon>
        <taxon>Xenopus</taxon>
    </lineage>
</organism>
<feature type="signal peptide" evidence="3">
    <location>
        <begin position="1"/>
        <end position="37"/>
    </location>
</feature>
<feature type="chain" id="PRO_0000045751" description="Insulin receptor subunit alpha" evidence="12">
    <location>
        <begin position="38"/>
        <end position="754"/>
    </location>
</feature>
<feature type="chain" id="PRO_0000045752" description="Insulin receptor subunit beta" evidence="12">
    <location>
        <begin position="759"/>
        <end position="1362"/>
    </location>
</feature>
<feature type="topological domain" description="Extracellular" evidence="3">
    <location>
        <begin position="759"/>
        <end position="951"/>
    </location>
</feature>
<feature type="transmembrane region" description="Helical" evidence="3">
    <location>
        <begin position="952"/>
        <end position="972"/>
    </location>
</feature>
<feature type="topological domain" description="Cytoplasmic" evidence="3">
    <location>
        <begin position="973"/>
        <end position="1362"/>
    </location>
</feature>
<feature type="domain" description="Fibronectin type-III 1" evidence="5">
    <location>
        <begin position="508"/>
        <end position="629"/>
    </location>
</feature>
<feature type="domain" description="Fibronectin type-III 2" evidence="5">
    <location>
        <begin position="633"/>
        <end position="730"/>
    </location>
</feature>
<feature type="domain" description="Fibronectin type-III 3" evidence="5">
    <location>
        <begin position="849"/>
        <end position="944"/>
    </location>
</feature>
<feature type="domain" description="Protein kinase" evidence="4">
    <location>
        <begin position="1012"/>
        <end position="1287"/>
    </location>
</feature>
<feature type="region of interest" description="Leucine-rich region" evidence="1">
    <location>
        <begin position="38"/>
        <end position="184"/>
    </location>
</feature>
<feature type="region of interest" description="Disordered" evidence="7">
    <location>
        <begin position="694"/>
        <end position="714"/>
    </location>
</feature>
<feature type="region of interest" description="Insulin-binding" evidence="1">
    <location>
        <begin position="741"/>
        <end position="749"/>
    </location>
</feature>
<feature type="compositionally biased region" description="Polar residues" evidence="7">
    <location>
        <begin position="705"/>
        <end position="714"/>
    </location>
</feature>
<feature type="active site" description="Proton donor/acceptor" evidence="1">
    <location>
        <position position="1148"/>
    </location>
</feature>
<feature type="binding site" evidence="4">
    <location>
        <position position="1022"/>
    </location>
    <ligand>
        <name>ATP</name>
        <dbReference type="ChEBI" id="CHEBI:30616"/>
    </ligand>
</feature>
<feature type="binding site" evidence="2 4">
    <location>
        <position position="1046"/>
    </location>
    <ligand>
        <name>ATP</name>
        <dbReference type="ChEBI" id="CHEBI:30616"/>
    </ligand>
</feature>
<feature type="binding site" evidence="4">
    <location>
        <begin position="1093"/>
        <end position="1099"/>
    </location>
    <ligand>
        <name>ATP</name>
        <dbReference type="ChEBI" id="CHEBI:30616"/>
    </ligand>
</feature>
<feature type="binding site" evidence="4">
    <location>
        <begin position="1152"/>
        <end position="1153"/>
    </location>
    <ligand>
        <name>ATP</name>
        <dbReference type="ChEBI" id="CHEBI:30616"/>
    </ligand>
</feature>
<feature type="binding site" evidence="4">
    <location>
        <position position="1166"/>
    </location>
    <ligand>
        <name>ATP</name>
        <dbReference type="ChEBI" id="CHEBI:30616"/>
    </ligand>
</feature>
<feature type="site" description="Insulin-binding" evidence="1">
    <location>
        <position position="76"/>
    </location>
</feature>
<feature type="modified residue" description="Phosphotyrosine; by autocatalysis" evidence="1">
    <location>
        <position position="993"/>
    </location>
</feature>
<feature type="modified residue" description="Phosphotyrosine; by autocatalysis" evidence="1">
    <location>
        <position position="1174"/>
    </location>
</feature>
<feature type="modified residue" description="Phosphotyrosine; by autocatalysis" evidence="1">
    <location>
        <position position="1178"/>
    </location>
</feature>
<feature type="modified residue" description="Phosphotyrosine; by autocatalysis" evidence="1">
    <location>
        <position position="1179"/>
    </location>
</feature>
<feature type="modified residue" description="Phosphotyrosine; by autocatalysis" evidence="1">
    <location>
        <position position="1335"/>
    </location>
</feature>
<feature type="modified residue" description="Phosphotyrosine; by autocatalysis" evidence="1">
    <location>
        <position position="1341"/>
    </location>
</feature>
<feature type="glycosylation site" description="N-linked (GlcNAc...) asparagine" evidence="3">
    <location>
        <position position="53"/>
    </location>
</feature>
<feature type="glycosylation site" description="N-linked (GlcNAc...) asparagine" evidence="3">
    <location>
        <position position="115"/>
    </location>
</feature>
<feature type="glycosylation site" description="N-linked (GlcNAc...) asparagine" evidence="3">
    <location>
        <position position="148"/>
    </location>
</feature>
<feature type="glycosylation site" description="N-linked (GlcNAc...) asparagine" evidence="3">
    <location>
        <position position="332"/>
    </location>
</feature>
<feature type="glycosylation site" description="N-linked (GlcNAc...) asparagine" evidence="3">
    <location>
        <position position="374"/>
    </location>
</feature>
<feature type="glycosylation site" description="N-linked (GlcNAc...) asparagine" evidence="3">
    <location>
        <position position="434"/>
    </location>
</feature>
<feature type="glycosylation site" description="N-linked (GlcNAc...) asparagine" evidence="3">
    <location>
        <position position="455"/>
    </location>
</feature>
<feature type="glycosylation site" description="N-linked (GlcNAc...) asparagine" evidence="3">
    <location>
        <position position="551"/>
    </location>
</feature>
<feature type="glycosylation site" description="N-linked (GlcNAc...) asparagine" evidence="3">
    <location>
        <position position="627"/>
    </location>
</feature>
<feature type="glycosylation site" description="N-linked (GlcNAc...) asparagine" evidence="3">
    <location>
        <position position="642"/>
    </location>
</feature>
<feature type="glycosylation site" description="N-linked (GlcNAc...) asparagine" evidence="3">
    <location>
        <position position="660"/>
    </location>
</feature>
<feature type="glycosylation site" description="N-linked (GlcNAc...) asparagine" evidence="3">
    <location>
        <position position="707"/>
    </location>
</feature>
<feature type="glycosylation site" description="N-linked (GlcNAc...) asparagine" evidence="3">
    <location>
        <position position="765"/>
    </location>
</feature>
<feature type="glycosylation site" description="N-linked (GlcNAc...) asparagine" evidence="3">
    <location>
        <position position="779"/>
    </location>
</feature>
<feature type="glycosylation site" description="N-linked (GlcNAc...) asparagine" evidence="3">
    <location>
        <position position="917"/>
    </location>
</feature>
<feature type="glycosylation site" description="N-linked (GlcNAc...) asparagine" evidence="3">
    <location>
        <position position="930"/>
    </location>
</feature>
<feature type="disulfide bond" evidence="1">
    <location>
        <begin position="45"/>
        <end position="63"/>
    </location>
</feature>
<feature type="disulfide bond" evidence="1">
    <location>
        <begin position="163"/>
        <end position="192"/>
    </location>
</feature>
<feature type="disulfide bond" evidence="1">
    <location>
        <begin position="196"/>
        <end position="219"/>
    </location>
</feature>
<feature type="disulfide bond" evidence="1">
    <location>
        <begin position="206"/>
        <end position="225"/>
    </location>
</feature>
<feature type="disulfide bond" evidence="2">
    <location>
        <begin position="229"/>
        <end position="238"/>
    </location>
</feature>
<feature type="disulfide bond" evidence="2">
    <location>
        <begin position="233"/>
        <end position="244"/>
    </location>
</feature>
<feature type="disulfide bond" evidence="2">
    <location>
        <begin position="245"/>
        <end position="253"/>
    </location>
</feature>
<feature type="disulfide bond" evidence="2">
    <location>
        <begin position="249"/>
        <end position="262"/>
    </location>
</feature>
<feature type="disulfide bond" evidence="2">
    <location>
        <begin position="265"/>
        <end position="274"/>
    </location>
</feature>
<feature type="disulfide bond" evidence="2">
    <location>
        <begin position="278"/>
        <end position="290"/>
    </location>
</feature>
<feature type="disulfide bond" evidence="1">
    <location>
        <begin position="296"/>
        <end position="321"/>
    </location>
</feature>
<feature type="disulfide bond" evidence="1">
    <location>
        <begin position="303"/>
        <end position="311"/>
    </location>
</feature>
<feature type="disulfide bond" evidence="2">
    <location>
        <begin position="325"/>
        <end position="338"/>
    </location>
</feature>
<feature type="disulfide bond" evidence="2">
    <location>
        <begin position="341"/>
        <end position="345"/>
    </location>
</feature>
<feature type="disulfide bond" evidence="1">
    <location>
        <begin position="349"/>
        <end position="370"/>
    </location>
</feature>
<feature type="disulfide bond" evidence="2">
    <location>
        <begin position="472"/>
        <end position="505"/>
    </location>
</feature>
<feature type="disulfide bond" description="Interchain" evidence="2">
    <location>
        <position position="561"/>
    </location>
</feature>
<feature type="disulfide bond" evidence="1">
    <location>
        <begin position="683"/>
        <end position="896"/>
    </location>
</feature>
<feature type="disulfide bond" evidence="1">
    <location>
        <begin position="822"/>
        <end position="830"/>
    </location>
</feature>
<accession>Q9PVZ4</accession>
<accession>Q99084</accession>
<protein>
    <recommendedName>
        <fullName>Insulin receptor</fullName>
        <shortName>IR</shortName>
        <ecNumber>2.7.10.1</ecNumber>
    </recommendedName>
    <alternativeName>
        <fullName>XTK-1b</fullName>
    </alternativeName>
    <alternativeName>
        <fullName>Xe-InsR</fullName>
    </alternativeName>
    <component>
        <recommendedName>
            <fullName>Insulin receptor subunit alpha</fullName>
        </recommendedName>
    </component>
    <component>
        <recommendedName>
            <fullName>Insulin receptor subunit beta</fullName>
        </recommendedName>
    </component>
</protein>
<proteinExistence type="evidence at protein level"/>
<keyword id="KW-0067">ATP-binding</keyword>
<keyword id="KW-1003">Cell membrane</keyword>
<keyword id="KW-0165">Cleavage on pair of basic residues</keyword>
<keyword id="KW-0217">Developmental protein</keyword>
<keyword id="KW-1015">Disulfide bond</keyword>
<keyword id="KW-0325">Glycoprotein</keyword>
<keyword id="KW-0418">Kinase</keyword>
<keyword id="KW-0472">Membrane</keyword>
<keyword id="KW-0547">Nucleotide-binding</keyword>
<keyword id="KW-0597">Phosphoprotein</keyword>
<keyword id="KW-0675">Receptor</keyword>
<keyword id="KW-1185">Reference proteome</keyword>
<keyword id="KW-0677">Repeat</keyword>
<keyword id="KW-0732">Signal</keyword>
<keyword id="KW-0808">Transferase</keyword>
<keyword id="KW-0812">Transmembrane</keyword>
<keyword id="KW-1133">Transmembrane helix</keyword>
<keyword id="KW-0829">Tyrosine-protein kinase</keyword>